<sequence>MVPRLKEKYEKEVIPALMEKFQYKNIMEVPKLEKIVINMGVGEAKENQKVLESAVADMQLISGQKPILTRAKKSVANFKIRENMPIGCKVTLRKNKMFEFADKLMNVALPRVRDFRGVSSKSFDGRGNYALGIKEQLIFPEVEYDKIDKVRGMDVIFVTNAKTDEEARELLRFLGMPFAQ</sequence>
<comment type="function">
    <text evidence="1">This is one of the proteins that bind and probably mediate the attachment of the 5S RNA into the large ribosomal subunit, where it forms part of the central protuberance. In the 70S ribosome it contacts protein S13 of the 30S subunit (bridge B1b), connecting the 2 subunits; this bridge is implicated in subunit movement. Contacts the P site tRNA; the 5S rRNA and some of its associated proteins might help stabilize positioning of ribosome-bound tRNAs.</text>
</comment>
<comment type="subunit">
    <text evidence="1">Part of the 50S ribosomal subunit; part of the 5S rRNA/L5/L18/L25 subcomplex. Contacts the 5S rRNA and the P site tRNA. Forms a bridge to the 30S subunit in the 70S ribosome.</text>
</comment>
<comment type="similarity">
    <text evidence="1">Belongs to the universal ribosomal protein uL5 family.</text>
</comment>
<accession>Q97EJ0</accession>
<dbReference type="EMBL" id="AE001437">
    <property type="protein sequence ID" value="AAK81060.1"/>
    <property type="molecule type" value="Genomic_DNA"/>
</dbReference>
<dbReference type="PIR" id="A97284">
    <property type="entry name" value="A97284"/>
</dbReference>
<dbReference type="RefSeq" id="NP_349720.1">
    <property type="nucleotide sequence ID" value="NC_003030.1"/>
</dbReference>
<dbReference type="RefSeq" id="WP_010966400.1">
    <property type="nucleotide sequence ID" value="NC_003030.1"/>
</dbReference>
<dbReference type="SMR" id="Q97EJ0"/>
<dbReference type="STRING" id="272562.CA_C3121"/>
<dbReference type="GeneID" id="44999608"/>
<dbReference type="KEGG" id="cac:CA_C3121"/>
<dbReference type="PATRIC" id="fig|272562.8.peg.3304"/>
<dbReference type="eggNOG" id="COG0094">
    <property type="taxonomic scope" value="Bacteria"/>
</dbReference>
<dbReference type="HOGENOM" id="CLU_061015_2_1_9"/>
<dbReference type="OrthoDB" id="9806626at2"/>
<dbReference type="Proteomes" id="UP000000814">
    <property type="component" value="Chromosome"/>
</dbReference>
<dbReference type="GO" id="GO:1990904">
    <property type="term" value="C:ribonucleoprotein complex"/>
    <property type="evidence" value="ECO:0007669"/>
    <property type="project" value="UniProtKB-KW"/>
</dbReference>
<dbReference type="GO" id="GO:0005840">
    <property type="term" value="C:ribosome"/>
    <property type="evidence" value="ECO:0007669"/>
    <property type="project" value="UniProtKB-KW"/>
</dbReference>
<dbReference type="GO" id="GO:0019843">
    <property type="term" value="F:rRNA binding"/>
    <property type="evidence" value="ECO:0007669"/>
    <property type="project" value="UniProtKB-UniRule"/>
</dbReference>
<dbReference type="GO" id="GO:0003735">
    <property type="term" value="F:structural constituent of ribosome"/>
    <property type="evidence" value="ECO:0007669"/>
    <property type="project" value="InterPro"/>
</dbReference>
<dbReference type="GO" id="GO:0000049">
    <property type="term" value="F:tRNA binding"/>
    <property type="evidence" value="ECO:0007669"/>
    <property type="project" value="UniProtKB-UniRule"/>
</dbReference>
<dbReference type="GO" id="GO:0006412">
    <property type="term" value="P:translation"/>
    <property type="evidence" value="ECO:0007669"/>
    <property type="project" value="UniProtKB-UniRule"/>
</dbReference>
<dbReference type="FunFam" id="3.30.1440.10:FF:000001">
    <property type="entry name" value="50S ribosomal protein L5"/>
    <property type="match status" value="1"/>
</dbReference>
<dbReference type="Gene3D" id="3.30.1440.10">
    <property type="match status" value="1"/>
</dbReference>
<dbReference type="HAMAP" id="MF_01333_B">
    <property type="entry name" value="Ribosomal_uL5_B"/>
    <property type="match status" value="1"/>
</dbReference>
<dbReference type="InterPro" id="IPR002132">
    <property type="entry name" value="Ribosomal_uL5"/>
</dbReference>
<dbReference type="InterPro" id="IPR020930">
    <property type="entry name" value="Ribosomal_uL5_bac-type"/>
</dbReference>
<dbReference type="InterPro" id="IPR031309">
    <property type="entry name" value="Ribosomal_uL5_C"/>
</dbReference>
<dbReference type="InterPro" id="IPR020929">
    <property type="entry name" value="Ribosomal_uL5_CS"/>
</dbReference>
<dbReference type="InterPro" id="IPR022803">
    <property type="entry name" value="Ribosomal_uL5_dom_sf"/>
</dbReference>
<dbReference type="InterPro" id="IPR031310">
    <property type="entry name" value="Ribosomal_uL5_N"/>
</dbReference>
<dbReference type="NCBIfam" id="NF000585">
    <property type="entry name" value="PRK00010.1"/>
    <property type="match status" value="1"/>
</dbReference>
<dbReference type="PANTHER" id="PTHR11994">
    <property type="entry name" value="60S RIBOSOMAL PROTEIN L11-RELATED"/>
    <property type="match status" value="1"/>
</dbReference>
<dbReference type="Pfam" id="PF00281">
    <property type="entry name" value="Ribosomal_L5"/>
    <property type="match status" value="1"/>
</dbReference>
<dbReference type="Pfam" id="PF00673">
    <property type="entry name" value="Ribosomal_L5_C"/>
    <property type="match status" value="1"/>
</dbReference>
<dbReference type="PIRSF" id="PIRSF002161">
    <property type="entry name" value="Ribosomal_L5"/>
    <property type="match status" value="1"/>
</dbReference>
<dbReference type="SUPFAM" id="SSF55282">
    <property type="entry name" value="RL5-like"/>
    <property type="match status" value="1"/>
</dbReference>
<dbReference type="PROSITE" id="PS00358">
    <property type="entry name" value="RIBOSOMAL_L5"/>
    <property type="match status" value="1"/>
</dbReference>
<gene>
    <name evidence="1" type="primary">rplE</name>
    <name type="ordered locus">CA_C3121</name>
</gene>
<reference key="1">
    <citation type="journal article" date="2001" name="J. Bacteriol.">
        <title>Genome sequence and comparative analysis of the solvent-producing bacterium Clostridium acetobutylicum.</title>
        <authorList>
            <person name="Noelling J."/>
            <person name="Breton G."/>
            <person name="Omelchenko M.V."/>
            <person name="Makarova K.S."/>
            <person name="Zeng Q."/>
            <person name="Gibson R."/>
            <person name="Lee H.M."/>
            <person name="Dubois J."/>
            <person name="Qiu D."/>
            <person name="Hitti J."/>
            <person name="Wolf Y.I."/>
            <person name="Tatusov R.L."/>
            <person name="Sabathe F."/>
            <person name="Doucette-Stamm L.A."/>
            <person name="Soucaille P."/>
            <person name="Daly M.J."/>
            <person name="Bennett G.N."/>
            <person name="Koonin E.V."/>
            <person name="Smith D.R."/>
        </authorList>
    </citation>
    <scope>NUCLEOTIDE SEQUENCE [LARGE SCALE GENOMIC DNA]</scope>
    <source>
        <strain>ATCC 824 / DSM 792 / JCM 1419 / IAM 19013 / LMG 5710 / NBRC 13948 / NRRL B-527 / VKM B-1787 / 2291 / W</strain>
    </source>
</reference>
<feature type="chain" id="PRO_0000124916" description="Large ribosomal subunit protein uL5">
    <location>
        <begin position="1"/>
        <end position="180"/>
    </location>
</feature>
<proteinExistence type="inferred from homology"/>
<evidence type="ECO:0000255" key="1">
    <source>
        <dbReference type="HAMAP-Rule" id="MF_01333"/>
    </source>
</evidence>
<evidence type="ECO:0000305" key="2"/>
<organism>
    <name type="scientific">Clostridium acetobutylicum (strain ATCC 824 / DSM 792 / JCM 1419 / IAM 19013 / LMG 5710 / NBRC 13948 / NRRL B-527 / VKM B-1787 / 2291 / W)</name>
    <dbReference type="NCBI Taxonomy" id="272562"/>
    <lineage>
        <taxon>Bacteria</taxon>
        <taxon>Bacillati</taxon>
        <taxon>Bacillota</taxon>
        <taxon>Clostridia</taxon>
        <taxon>Eubacteriales</taxon>
        <taxon>Clostridiaceae</taxon>
        <taxon>Clostridium</taxon>
    </lineage>
</organism>
<protein>
    <recommendedName>
        <fullName evidence="1">Large ribosomal subunit protein uL5</fullName>
    </recommendedName>
    <alternativeName>
        <fullName evidence="2">50S ribosomal protein L5</fullName>
    </alternativeName>
</protein>
<name>RL5_CLOAB</name>
<keyword id="KW-1185">Reference proteome</keyword>
<keyword id="KW-0687">Ribonucleoprotein</keyword>
<keyword id="KW-0689">Ribosomal protein</keyword>
<keyword id="KW-0694">RNA-binding</keyword>
<keyword id="KW-0699">rRNA-binding</keyword>
<keyword id="KW-0820">tRNA-binding</keyword>